<proteinExistence type="inferred from homology"/>
<reference key="1">
    <citation type="submission" date="2005-09" db="EMBL/GenBank/DDBJ databases">
        <authorList>
            <person name="Glass J.I."/>
            <person name="Lartigue C."/>
            <person name="Pfannkoch C."/>
            <person name="Baden-Tillson H."/>
            <person name="Smith H.O."/>
            <person name="Venter J.C."/>
            <person name="Roske K."/>
            <person name="Wise K.S."/>
            <person name="Calcutt M.J."/>
            <person name="Nelson W.C."/>
            <person name="Nierman W.C."/>
        </authorList>
    </citation>
    <scope>NUCLEOTIDE SEQUENCE [LARGE SCALE GENOMIC DNA]</scope>
    <source>
        <strain>California kid / ATCC 27343 / NCTC 10154</strain>
    </source>
</reference>
<reference key="2">
    <citation type="journal article" date="1995" name="Mol. Microbiol.">
        <title>Exploring the Mycoplasma capricolum genome: a minimal cell reveals its physiology.</title>
        <authorList>
            <person name="Bork P."/>
            <person name="Ouzounis C."/>
            <person name="Casari G."/>
            <person name="Schneider R."/>
            <person name="Sander C."/>
            <person name="Dolan M."/>
            <person name="Gilbert W."/>
            <person name="Gillevet P.M."/>
        </authorList>
    </citation>
    <scope>NUCLEOTIDE SEQUENCE [GENOMIC DNA] OF 1-182</scope>
</reference>
<accession>Q49006</accession>
<accession>Q2SRB0</accession>
<comment type="function">
    <text evidence="1">Catalyzes the interconversion of 2-phosphoglycerate and 3-phosphoglycerate.</text>
</comment>
<comment type="catalytic activity">
    <reaction evidence="1">
        <text>(2R)-2-phosphoglycerate = (2R)-3-phosphoglycerate</text>
        <dbReference type="Rhea" id="RHEA:15901"/>
        <dbReference type="ChEBI" id="CHEBI:58272"/>
        <dbReference type="ChEBI" id="CHEBI:58289"/>
        <dbReference type="EC" id="5.4.2.12"/>
    </reaction>
</comment>
<comment type="cofactor">
    <cofactor evidence="1">
        <name>Mn(2+)</name>
        <dbReference type="ChEBI" id="CHEBI:29035"/>
    </cofactor>
    <text evidence="1">Binds 2 manganese ions per subunit.</text>
</comment>
<comment type="pathway">
    <text evidence="1">Carbohydrate degradation; glycolysis; pyruvate from D-glyceraldehyde 3-phosphate: step 3/5.</text>
</comment>
<comment type="subunit">
    <text evidence="1">Monomer.</text>
</comment>
<comment type="similarity">
    <text evidence="1">Belongs to the BPG-independent phosphoglycerate mutase family.</text>
</comment>
<evidence type="ECO:0000255" key="1">
    <source>
        <dbReference type="HAMAP-Rule" id="MF_01038"/>
    </source>
</evidence>
<keyword id="KW-0324">Glycolysis</keyword>
<keyword id="KW-0413">Isomerase</keyword>
<keyword id="KW-0464">Manganese</keyword>
<keyword id="KW-0479">Metal-binding</keyword>
<protein>
    <recommendedName>
        <fullName evidence="1">2,3-bisphosphoglycerate-independent phosphoglycerate mutase</fullName>
        <shortName evidence="1">BPG-independent PGAM</shortName>
        <shortName evidence="1">Phosphoglyceromutase</shortName>
        <shortName evidence="1">iPGM</shortName>
        <ecNumber evidence="1">5.4.2.12</ecNumber>
    </recommendedName>
</protein>
<feature type="chain" id="PRO_0000212165" description="2,3-bisphosphoglycerate-independent phosphoglycerate mutase">
    <location>
        <begin position="1"/>
        <end position="531"/>
    </location>
</feature>
<feature type="active site" description="Phosphoserine intermediate" evidence="1">
    <location>
        <position position="63"/>
    </location>
</feature>
<feature type="binding site" evidence="1">
    <location>
        <position position="13"/>
    </location>
    <ligand>
        <name>Mn(2+)</name>
        <dbReference type="ChEBI" id="CHEBI:29035"/>
        <label>2</label>
    </ligand>
</feature>
<feature type="binding site" evidence="1">
    <location>
        <position position="63"/>
    </location>
    <ligand>
        <name>Mn(2+)</name>
        <dbReference type="ChEBI" id="CHEBI:29035"/>
        <label>2</label>
    </ligand>
</feature>
<feature type="binding site" evidence="1">
    <location>
        <position position="124"/>
    </location>
    <ligand>
        <name>substrate</name>
    </ligand>
</feature>
<feature type="binding site" evidence="1">
    <location>
        <begin position="154"/>
        <end position="155"/>
    </location>
    <ligand>
        <name>substrate</name>
    </ligand>
</feature>
<feature type="binding site" evidence="1">
    <location>
        <position position="187"/>
    </location>
    <ligand>
        <name>substrate</name>
    </ligand>
</feature>
<feature type="binding site" evidence="1">
    <location>
        <position position="193"/>
    </location>
    <ligand>
        <name>substrate</name>
    </ligand>
</feature>
<feature type="binding site" evidence="1">
    <location>
        <begin position="261"/>
        <end position="264"/>
    </location>
    <ligand>
        <name>substrate</name>
    </ligand>
</feature>
<feature type="binding site" evidence="1">
    <location>
        <position position="342"/>
    </location>
    <ligand>
        <name>substrate</name>
    </ligand>
</feature>
<feature type="binding site" evidence="1">
    <location>
        <position position="420"/>
    </location>
    <ligand>
        <name>Mn(2+)</name>
        <dbReference type="ChEBI" id="CHEBI:29035"/>
        <label>1</label>
    </ligand>
</feature>
<feature type="binding site" evidence="1">
    <location>
        <position position="424"/>
    </location>
    <ligand>
        <name>Mn(2+)</name>
        <dbReference type="ChEBI" id="CHEBI:29035"/>
        <label>1</label>
    </ligand>
</feature>
<feature type="binding site" evidence="1">
    <location>
        <position position="462"/>
    </location>
    <ligand>
        <name>Mn(2+)</name>
        <dbReference type="ChEBI" id="CHEBI:29035"/>
        <label>2</label>
    </ligand>
</feature>
<feature type="binding site" evidence="1">
    <location>
        <position position="463"/>
    </location>
    <ligand>
        <name>Mn(2+)</name>
        <dbReference type="ChEBI" id="CHEBI:29035"/>
        <label>2</label>
    </ligand>
</feature>
<feature type="binding site" evidence="1">
    <location>
        <position position="480"/>
    </location>
    <ligand>
        <name>Mn(2+)</name>
        <dbReference type="ChEBI" id="CHEBI:29035"/>
        <label>1</label>
    </ligand>
</feature>
<name>GPMI_MYCCT</name>
<organism>
    <name type="scientific">Mycoplasma capricolum subsp. capricolum (strain California kid / ATCC 27343 / NCTC 10154)</name>
    <dbReference type="NCBI Taxonomy" id="340047"/>
    <lineage>
        <taxon>Bacteria</taxon>
        <taxon>Bacillati</taxon>
        <taxon>Mycoplasmatota</taxon>
        <taxon>Mollicutes</taxon>
        <taxon>Mycoplasmataceae</taxon>
        <taxon>Mycoplasma</taxon>
    </lineage>
</organism>
<gene>
    <name evidence="1" type="primary">gpmI</name>
    <name type="ordered locus">MCAP_0752</name>
</gene>
<dbReference type="EC" id="5.4.2.12" evidence="1"/>
<dbReference type="EMBL" id="CP000123">
    <property type="protein sequence ID" value="ABC01874.1"/>
    <property type="molecule type" value="Genomic_DNA"/>
</dbReference>
<dbReference type="EMBL" id="Z33087">
    <property type="protein sequence ID" value="CAA83752.1"/>
    <property type="molecule type" value="Genomic_DNA"/>
</dbReference>
<dbReference type="PIR" id="S77784">
    <property type="entry name" value="S77784"/>
</dbReference>
<dbReference type="RefSeq" id="WP_011387587.1">
    <property type="nucleotide sequence ID" value="NC_007633.1"/>
</dbReference>
<dbReference type="SMR" id="Q49006"/>
<dbReference type="GeneID" id="23778294"/>
<dbReference type="KEGG" id="mcp:MCAP_0752"/>
<dbReference type="HOGENOM" id="CLU_026099_2_0_14"/>
<dbReference type="PhylomeDB" id="Q49006"/>
<dbReference type="UniPathway" id="UPA00109">
    <property type="reaction ID" value="UER00186"/>
</dbReference>
<dbReference type="Proteomes" id="UP000001928">
    <property type="component" value="Chromosome"/>
</dbReference>
<dbReference type="GO" id="GO:0005829">
    <property type="term" value="C:cytosol"/>
    <property type="evidence" value="ECO:0007669"/>
    <property type="project" value="TreeGrafter"/>
</dbReference>
<dbReference type="GO" id="GO:0030145">
    <property type="term" value="F:manganese ion binding"/>
    <property type="evidence" value="ECO:0007669"/>
    <property type="project" value="UniProtKB-UniRule"/>
</dbReference>
<dbReference type="GO" id="GO:0004619">
    <property type="term" value="F:phosphoglycerate mutase activity"/>
    <property type="evidence" value="ECO:0007669"/>
    <property type="project" value="UniProtKB-EC"/>
</dbReference>
<dbReference type="GO" id="GO:0006007">
    <property type="term" value="P:glucose catabolic process"/>
    <property type="evidence" value="ECO:0007669"/>
    <property type="project" value="InterPro"/>
</dbReference>
<dbReference type="GO" id="GO:0006096">
    <property type="term" value="P:glycolytic process"/>
    <property type="evidence" value="ECO:0007669"/>
    <property type="project" value="UniProtKB-UniRule"/>
</dbReference>
<dbReference type="CDD" id="cd16010">
    <property type="entry name" value="iPGM"/>
    <property type="match status" value="1"/>
</dbReference>
<dbReference type="FunFam" id="3.40.1450.10:FF:000002">
    <property type="entry name" value="2,3-bisphosphoglycerate-independent phosphoglycerate mutase"/>
    <property type="match status" value="1"/>
</dbReference>
<dbReference type="Gene3D" id="3.40.720.10">
    <property type="entry name" value="Alkaline Phosphatase, subunit A"/>
    <property type="match status" value="1"/>
</dbReference>
<dbReference type="Gene3D" id="3.40.1450.10">
    <property type="entry name" value="BPG-independent phosphoglycerate mutase, domain B"/>
    <property type="match status" value="1"/>
</dbReference>
<dbReference type="HAMAP" id="MF_01038">
    <property type="entry name" value="GpmI"/>
    <property type="match status" value="1"/>
</dbReference>
<dbReference type="InterPro" id="IPR017850">
    <property type="entry name" value="Alkaline_phosphatase_core_sf"/>
</dbReference>
<dbReference type="InterPro" id="IPR011258">
    <property type="entry name" value="BPG-indep_PGM_N"/>
</dbReference>
<dbReference type="InterPro" id="IPR006124">
    <property type="entry name" value="Metalloenzyme"/>
</dbReference>
<dbReference type="InterPro" id="IPR036646">
    <property type="entry name" value="PGAM_B_sf"/>
</dbReference>
<dbReference type="InterPro" id="IPR005995">
    <property type="entry name" value="Pgm_bpd_ind"/>
</dbReference>
<dbReference type="NCBIfam" id="TIGR01307">
    <property type="entry name" value="pgm_bpd_ind"/>
    <property type="match status" value="1"/>
</dbReference>
<dbReference type="PANTHER" id="PTHR31637">
    <property type="entry name" value="2,3-BISPHOSPHOGLYCERATE-INDEPENDENT PHOSPHOGLYCERATE MUTASE"/>
    <property type="match status" value="1"/>
</dbReference>
<dbReference type="PANTHER" id="PTHR31637:SF0">
    <property type="entry name" value="2,3-BISPHOSPHOGLYCERATE-INDEPENDENT PHOSPHOGLYCERATE MUTASE"/>
    <property type="match status" value="1"/>
</dbReference>
<dbReference type="Pfam" id="PF06415">
    <property type="entry name" value="iPGM_N"/>
    <property type="match status" value="1"/>
</dbReference>
<dbReference type="Pfam" id="PF01676">
    <property type="entry name" value="Metalloenzyme"/>
    <property type="match status" value="1"/>
</dbReference>
<dbReference type="PIRSF" id="PIRSF001492">
    <property type="entry name" value="IPGAM"/>
    <property type="match status" value="1"/>
</dbReference>
<dbReference type="SUPFAM" id="SSF64158">
    <property type="entry name" value="2,3-Bisphosphoglycerate-independent phosphoglycerate mutase, substrate-binding domain"/>
    <property type="match status" value="1"/>
</dbReference>
<dbReference type="SUPFAM" id="SSF53649">
    <property type="entry name" value="Alkaline phosphatase-like"/>
    <property type="match status" value="1"/>
</dbReference>
<sequence>MKVKRPILLAILDGWGLAEPDKGNAVDNANMIFVKQLKQTYPWLKAHASGKWVGLPENQMGNSEVGHIHLGAGRINLESLAKLNHETKTNNIAKNDEIVKTFEYVKKNNSALHLMGLFSNGGVHSHFDHMIAIYKAAIVYGITNIKFDLITDGRDTKPKLAYDFIKNLLELIKQNNNIGIISSVSGRYYAMDRDKRFDRSRIAYNAIVNRNNVRSFTNILDYIQQEYMINHDDEMIIPAFNQDDFNGNLKANDAIIMTNFRPDRAIQISSILTNKNYIAWQSEAFSDAEFIGDKIRFVSMMKYSDSVTSPHIAYPPKPLTNTLGQYLSKLGLKQLRIAETEKIAHVTFFFDGGNDYFKNGLAKNDEITLANAYIDLIPSAKVATYDLKPQMSAVEITDKLLEEIKKDEFDFIVLNFANCDMVGHTGNNKATEIACKTLDDQLKRIHDEFVLKHNGIMVITADHGNAEIMIDKDDQVNKKHTTSLVPIIITDKNIKLKQNDPAIAKVAPTILDLMNIEIPKEMELESMIDHN</sequence>